<name>T61_TERGU</name>
<protein>
    <recommendedName>
        <fullName evidence="3">Teretoxin Tgu6.1</fullName>
    </recommendedName>
    <alternativeName>
        <fullName evidence="6">Teretoxin peptide 6.1</fullName>
    </alternativeName>
</protein>
<keyword id="KW-1015">Disulfide bond</keyword>
<keyword id="KW-0528">Neurotoxin</keyword>
<keyword id="KW-0964">Secreted</keyword>
<keyword id="KW-0732">Signal</keyword>
<keyword id="KW-0800">Toxin</keyword>
<accession>A0A141TBR6</accession>
<evidence type="ECO:0000255" key="1"/>
<evidence type="ECO:0000269" key="2">
    <source>
    </source>
</evidence>
<evidence type="ECO:0000303" key="3">
    <source>
    </source>
</evidence>
<evidence type="ECO:0000305" key="4"/>
<evidence type="ECO:0000305" key="5">
    <source>
    </source>
</evidence>
<evidence type="ECO:0000312" key="6">
    <source>
        <dbReference type="EMBL" id="AML61541.1"/>
    </source>
</evidence>
<dbReference type="EMBL" id="KU738608">
    <property type="protein sequence ID" value="AML61541.1"/>
    <property type="molecule type" value="mRNA"/>
</dbReference>
<dbReference type="GO" id="GO:0005576">
    <property type="term" value="C:extracellular region"/>
    <property type="evidence" value="ECO:0007669"/>
    <property type="project" value="UniProtKB-SubCell"/>
</dbReference>
<dbReference type="GO" id="GO:0090729">
    <property type="term" value="F:toxin activity"/>
    <property type="evidence" value="ECO:0007669"/>
    <property type="project" value="UniProtKB-KW"/>
</dbReference>
<feature type="signal peptide" evidence="1">
    <location>
        <begin position="1"/>
        <end position="16"/>
    </location>
</feature>
<feature type="propeptide" id="PRO_0000454647" evidence="5">
    <location>
        <begin position="17"/>
        <end position="52"/>
    </location>
</feature>
<feature type="chain" id="PRO_0000454648" description="Teretoxin Tgu6.1" evidence="5">
    <location>
        <begin position="53"/>
        <end position="96"/>
    </location>
</feature>
<organism>
    <name type="scientific">Terebra guttata</name>
    <name type="common">White spotted auger snail</name>
    <name type="synonym">Epitonium guttatum</name>
    <dbReference type="NCBI Taxonomy" id="553711"/>
    <lineage>
        <taxon>Eukaryota</taxon>
        <taxon>Metazoa</taxon>
        <taxon>Spiralia</taxon>
        <taxon>Lophotrochozoa</taxon>
        <taxon>Mollusca</taxon>
        <taxon>Gastropoda</taxon>
        <taxon>Caenogastropoda</taxon>
        <taxon>Neogastropoda</taxon>
        <taxon>Conoidea</taxon>
        <taxon>Terebridae</taxon>
        <taxon>Terebra</taxon>
    </lineage>
</organism>
<sequence length="96" mass="10513">MRPFLVFVLIVSVSLAFSFEDMPNKGGDSVASITADQARGHKRNPLFPFAQRSLTELKAGGCPLYCSSQIFCCHGRKCRNVDGRLKCVTEASMLGK</sequence>
<comment type="function">
    <text evidence="2">The recombinant protein causes paralysis to polychaete worms (Nereis virens), the natural prey of terebrid snails.</text>
</comment>
<comment type="subcellular location">
    <subcellularLocation>
        <location evidence="5">Secreted</location>
    </subcellularLocation>
</comment>
<comment type="tissue specificity">
    <text evidence="4">Expressed by the venom duct.</text>
</comment>
<comment type="domain">
    <text evidence="4">The cysteine framework is VI/VII (C-C-CC-C-C).</text>
</comment>
<comment type="PTM">
    <text evidence="4">Contains 3 disulfide bonds.</text>
</comment>
<reference key="1">
    <citation type="journal article" date="2016" name="Toxins">
        <title>Characterization and recombinant expression of terebrid venom peptide from Terebra guttata.</title>
        <authorList>
            <person name="Moon J."/>
            <person name="Gorson J."/>
            <person name="Wright M.E."/>
            <person name="Yee L."/>
            <person name="Khawaja S."/>
            <person name="Shin H.Y."/>
            <person name="Karma Y."/>
            <person name="Musunri R.L."/>
            <person name="Yun M."/>
            <person name="Holford M."/>
        </authorList>
    </citation>
    <scope>NUCLEOTIDE SEQUENCE [MRNA]</scope>
    <scope>FUNCTION</scope>
    <scope>BIOASSAY</scope>
    <scope>RECOMBINANT EXPRESSION</scope>
</reference>
<proteinExistence type="inferred from homology"/>